<sequence>MQILLVEDDNTLFQELKKELEQWDFNVVGVEDFSHVMETFETFNPEIVILDVQLPKYDGFYWCRKMRQQSNVPILFLSSRDNPMDQVMSMELGADDYMQKPFYTNVLIAKLQAIYRRVYEFGVEEKRTLSWQDATVDLSKDSIQKDDKTIFLSKTEMIILEMLINKRNQIVTRDTLITALWDDEAFVSDNTLTVNVNRLRKKLSEIDMDSAIETKVGKGYLAHE</sequence>
<evidence type="ECO:0000250" key="1"/>
<evidence type="ECO:0000255" key="2">
    <source>
        <dbReference type="PROSITE-ProRule" id="PRU00169"/>
    </source>
</evidence>
<evidence type="ECO:0000255" key="3">
    <source>
        <dbReference type="PROSITE-ProRule" id="PRU01091"/>
    </source>
</evidence>
<reference key="1">
    <citation type="journal article" date="2003" name="Mol. Microbiol.">
        <title>Genome-based analysis of virulence genes in a non-biofilm-forming Staphylococcus epidermidis strain (ATCC 12228).</title>
        <authorList>
            <person name="Zhang Y.-Q."/>
            <person name="Ren S.-X."/>
            <person name="Li H.-L."/>
            <person name="Wang Y.-X."/>
            <person name="Fu G."/>
            <person name="Yang J."/>
            <person name="Qin Z.-Q."/>
            <person name="Miao Y.-G."/>
            <person name="Wang W.-Y."/>
            <person name="Chen R.-S."/>
            <person name="Shen Y."/>
            <person name="Chen Z."/>
            <person name="Yuan Z.-H."/>
            <person name="Zhao G.-P."/>
            <person name="Qu D."/>
            <person name="Danchin A."/>
            <person name="Wen Y.-M."/>
        </authorList>
    </citation>
    <scope>NUCLEOTIDE SEQUENCE [LARGE SCALE GENOMIC DNA]</scope>
    <source>
        <strain>ATCC 12228 / FDA PCI 1200</strain>
    </source>
</reference>
<accession>Q8CQ37</accession>
<feature type="chain" id="PRO_0000347909" description="Response regulator protein GraR">
    <location>
        <begin position="1"/>
        <end position="224"/>
    </location>
</feature>
<feature type="domain" description="Response regulatory" evidence="2">
    <location>
        <begin position="2"/>
        <end position="115"/>
    </location>
</feature>
<feature type="DNA-binding region" description="OmpR/PhoB-type" evidence="3">
    <location>
        <begin position="126"/>
        <end position="224"/>
    </location>
</feature>
<feature type="modified residue" description="4-aspartylphosphate" evidence="2">
    <location>
        <position position="51"/>
    </location>
</feature>
<gene>
    <name type="primary">graR</name>
    <name type="ordered locus">SE_0427</name>
</gene>
<keyword id="KW-0010">Activator</keyword>
<keyword id="KW-0046">Antibiotic resistance</keyword>
<keyword id="KW-0963">Cytoplasm</keyword>
<keyword id="KW-0238">DNA-binding</keyword>
<keyword id="KW-0597">Phosphoprotein</keyword>
<keyword id="KW-0678">Repressor</keyword>
<keyword id="KW-0804">Transcription</keyword>
<keyword id="KW-0805">Transcription regulation</keyword>
<keyword id="KW-0902">Two-component regulatory system</keyword>
<keyword id="KW-0843">Virulence</keyword>
<name>GRAR_STAES</name>
<comment type="function">
    <text evidence="1">Member of the two-component regulatory system GraR/GraS involved in resistance against cationic antimicrobial peptides (CAMPs).</text>
</comment>
<comment type="subcellular location">
    <subcellularLocation>
        <location evidence="1">Cytoplasm</location>
    </subcellularLocation>
</comment>
<comment type="PTM">
    <text evidence="1">Phosphorylated by GraS.</text>
</comment>
<proteinExistence type="inferred from homology"/>
<dbReference type="EMBL" id="AE015929">
    <property type="protein sequence ID" value="AAO04024.1"/>
    <property type="molecule type" value="Genomic_DNA"/>
</dbReference>
<dbReference type="RefSeq" id="NP_763982.1">
    <property type="nucleotide sequence ID" value="NC_004461.1"/>
</dbReference>
<dbReference type="RefSeq" id="WP_001832046.1">
    <property type="nucleotide sequence ID" value="NZ_WBME01000020.1"/>
</dbReference>
<dbReference type="SMR" id="Q8CQ37"/>
<dbReference type="GeneID" id="50019417"/>
<dbReference type="KEGG" id="sep:SE_0427"/>
<dbReference type="PATRIC" id="fig|176280.10.peg.401"/>
<dbReference type="eggNOG" id="COG0745">
    <property type="taxonomic scope" value="Bacteria"/>
</dbReference>
<dbReference type="HOGENOM" id="CLU_000445_30_3_9"/>
<dbReference type="OrthoDB" id="9790442at2"/>
<dbReference type="Proteomes" id="UP000001411">
    <property type="component" value="Chromosome"/>
</dbReference>
<dbReference type="GO" id="GO:0005829">
    <property type="term" value="C:cytosol"/>
    <property type="evidence" value="ECO:0007669"/>
    <property type="project" value="TreeGrafter"/>
</dbReference>
<dbReference type="GO" id="GO:0032993">
    <property type="term" value="C:protein-DNA complex"/>
    <property type="evidence" value="ECO:0007669"/>
    <property type="project" value="TreeGrafter"/>
</dbReference>
<dbReference type="GO" id="GO:0000156">
    <property type="term" value="F:phosphorelay response regulator activity"/>
    <property type="evidence" value="ECO:0007669"/>
    <property type="project" value="TreeGrafter"/>
</dbReference>
<dbReference type="GO" id="GO:0000976">
    <property type="term" value="F:transcription cis-regulatory region binding"/>
    <property type="evidence" value="ECO:0007669"/>
    <property type="project" value="TreeGrafter"/>
</dbReference>
<dbReference type="GO" id="GO:0006355">
    <property type="term" value="P:regulation of DNA-templated transcription"/>
    <property type="evidence" value="ECO:0007669"/>
    <property type="project" value="InterPro"/>
</dbReference>
<dbReference type="GO" id="GO:0046677">
    <property type="term" value="P:response to antibiotic"/>
    <property type="evidence" value="ECO:0007669"/>
    <property type="project" value="UniProtKB-KW"/>
</dbReference>
<dbReference type="CDD" id="cd18159">
    <property type="entry name" value="REC_OmpR_NsrR-like"/>
    <property type="match status" value="1"/>
</dbReference>
<dbReference type="CDD" id="cd00383">
    <property type="entry name" value="trans_reg_C"/>
    <property type="match status" value="1"/>
</dbReference>
<dbReference type="FunFam" id="3.40.50.2300:FF:000232">
    <property type="entry name" value="Response regulator GraR"/>
    <property type="match status" value="1"/>
</dbReference>
<dbReference type="FunFam" id="1.10.10.10:FF:000546">
    <property type="entry name" value="Two-component response regulator GraR"/>
    <property type="match status" value="1"/>
</dbReference>
<dbReference type="Gene3D" id="3.40.50.2300">
    <property type="match status" value="1"/>
</dbReference>
<dbReference type="Gene3D" id="1.10.10.10">
    <property type="entry name" value="Winged helix-like DNA-binding domain superfamily/Winged helix DNA-binding domain"/>
    <property type="match status" value="1"/>
</dbReference>
<dbReference type="InterPro" id="IPR011006">
    <property type="entry name" value="CheY-like_superfamily"/>
</dbReference>
<dbReference type="InterPro" id="IPR001867">
    <property type="entry name" value="OmpR/PhoB-type_DNA-bd"/>
</dbReference>
<dbReference type="InterPro" id="IPR016032">
    <property type="entry name" value="Sig_transdc_resp-reg_C-effctor"/>
</dbReference>
<dbReference type="InterPro" id="IPR001789">
    <property type="entry name" value="Sig_transdc_resp-reg_receiver"/>
</dbReference>
<dbReference type="InterPro" id="IPR039420">
    <property type="entry name" value="WalR-like"/>
</dbReference>
<dbReference type="InterPro" id="IPR036388">
    <property type="entry name" value="WH-like_DNA-bd_sf"/>
</dbReference>
<dbReference type="PANTHER" id="PTHR48111">
    <property type="entry name" value="REGULATOR OF RPOS"/>
    <property type="match status" value="1"/>
</dbReference>
<dbReference type="PANTHER" id="PTHR48111:SF27">
    <property type="entry name" value="SENSORY TRANSDUCTION PROTEIN BCER"/>
    <property type="match status" value="1"/>
</dbReference>
<dbReference type="Pfam" id="PF00072">
    <property type="entry name" value="Response_reg"/>
    <property type="match status" value="1"/>
</dbReference>
<dbReference type="Pfam" id="PF00486">
    <property type="entry name" value="Trans_reg_C"/>
    <property type="match status" value="1"/>
</dbReference>
<dbReference type="SMART" id="SM00448">
    <property type="entry name" value="REC"/>
    <property type="match status" value="1"/>
</dbReference>
<dbReference type="SMART" id="SM00862">
    <property type="entry name" value="Trans_reg_C"/>
    <property type="match status" value="1"/>
</dbReference>
<dbReference type="SUPFAM" id="SSF46894">
    <property type="entry name" value="C-terminal effector domain of the bipartite response regulators"/>
    <property type="match status" value="1"/>
</dbReference>
<dbReference type="SUPFAM" id="SSF52172">
    <property type="entry name" value="CheY-like"/>
    <property type="match status" value="1"/>
</dbReference>
<dbReference type="PROSITE" id="PS51755">
    <property type="entry name" value="OMPR_PHOB"/>
    <property type="match status" value="1"/>
</dbReference>
<dbReference type="PROSITE" id="PS50110">
    <property type="entry name" value="RESPONSE_REGULATORY"/>
    <property type="match status" value="1"/>
</dbReference>
<protein>
    <recommendedName>
        <fullName>Response regulator protein GraR</fullName>
    </recommendedName>
    <alternativeName>
        <fullName>Glycopeptide resistance-associated protein R</fullName>
    </alternativeName>
</protein>
<organism>
    <name type="scientific">Staphylococcus epidermidis (strain ATCC 12228 / FDA PCI 1200)</name>
    <dbReference type="NCBI Taxonomy" id="176280"/>
    <lineage>
        <taxon>Bacteria</taxon>
        <taxon>Bacillati</taxon>
        <taxon>Bacillota</taxon>
        <taxon>Bacilli</taxon>
        <taxon>Bacillales</taxon>
        <taxon>Staphylococcaceae</taxon>
        <taxon>Staphylococcus</taxon>
    </lineage>
</organism>